<reference key="1">
    <citation type="submission" date="2008-05" db="EMBL/GenBank/DDBJ databases">
        <title>Complete sequence of chromosome of Geobacter lovleyi SZ.</title>
        <authorList>
            <consortium name="US DOE Joint Genome Institute"/>
            <person name="Lucas S."/>
            <person name="Copeland A."/>
            <person name="Lapidus A."/>
            <person name="Glavina del Rio T."/>
            <person name="Dalin E."/>
            <person name="Tice H."/>
            <person name="Bruce D."/>
            <person name="Goodwin L."/>
            <person name="Pitluck S."/>
            <person name="Chertkov O."/>
            <person name="Meincke L."/>
            <person name="Brettin T."/>
            <person name="Detter J.C."/>
            <person name="Han C."/>
            <person name="Tapia R."/>
            <person name="Kuske C.R."/>
            <person name="Schmutz J."/>
            <person name="Larimer F."/>
            <person name="Land M."/>
            <person name="Hauser L."/>
            <person name="Kyrpides N."/>
            <person name="Mikhailova N."/>
            <person name="Sung Y."/>
            <person name="Fletcher K.E."/>
            <person name="Ritalahti K.M."/>
            <person name="Loeffler F.E."/>
            <person name="Richardson P."/>
        </authorList>
    </citation>
    <scope>NUCLEOTIDE SEQUENCE [LARGE SCALE GENOMIC DNA]</scope>
    <source>
        <strain>ATCC BAA-1151 / DSM 17278 / SZ</strain>
    </source>
</reference>
<keyword id="KW-1185">Reference proteome</keyword>
<keyword id="KW-0687">Ribonucleoprotein</keyword>
<keyword id="KW-0689">Ribosomal protein</keyword>
<feature type="chain" id="PRO_1000127359" description="Large ribosomal subunit protein bL35">
    <location>
        <begin position="1"/>
        <end position="65"/>
    </location>
</feature>
<feature type="region of interest" description="Disordered" evidence="2">
    <location>
        <begin position="1"/>
        <end position="23"/>
    </location>
</feature>
<feature type="compositionally biased region" description="Basic residues" evidence="2">
    <location>
        <begin position="10"/>
        <end position="23"/>
    </location>
</feature>
<sequence>MPKIKTNRGAAKRFKKTGTGKVKRAHAFTSHILTHKTSKRKRNLRQSNTVAAVDQKNICALIPYM</sequence>
<comment type="similarity">
    <text evidence="1">Belongs to the bacterial ribosomal protein bL35 family.</text>
</comment>
<gene>
    <name evidence="1" type="primary">rpmI</name>
    <name type="ordered locus">Glov_1871</name>
</gene>
<organism>
    <name type="scientific">Trichlorobacter lovleyi (strain ATCC BAA-1151 / DSM 17278 / SZ)</name>
    <name type="common">Geobacter lovleyi</name>
    <dbReference type="NCBI Taxonomy" id="398767"/>
    <lineage>
        <taxon>Bacteria</taxon>
        <taxon>Pseudomonadati</taxon>
        <taxon>Thermodesulfobacteriota</taxon>
        <taxon>Desulfuromonadia</taxon>
        <taxon>Geobacterales</taxon>
        <taxon>Geobacteraceae</taxon>
        <taxon>Trichlorobacter</taxon>
    </lineage>
</organism>
<dbReference type="EMBL" id="CP001089">
    <property type="protein sequence ID" value="ACD95587.1"/>
    <property type="molecule type" value="Genomic_DNA"/>
</dbReference>
<dbReference type="RefSeq" id="WP_012469926.1">
    <property type="nucleotide sequence ID" value="NC_010814.1"/>
</dbReference>
<dbReference type="SMR" id="B3E1T7"/>
<dbReference type="STRING" id="398767.Glov_1871"/>
<dbReference type="KEGG" id="glo:Glov_1871"/>
<dbReference type="eggNOG" id="COG0291">
    <property type="taxonomic scope" value="Bacteria"/>
</dbReference>
<dbReference type="HOGENOM" id="CLU_169643_4_3_7"/>
<dbReference type="OrthoDB" id="9804851at2"/>
<dbReference type="Proteomes" id="UP000002420">
    <property type="component" value="Chromosome"/>
</dbReference>
<dbReference type="GO" id="GO:0022625">
    <property type="term" value="C:cytosolic large ribosomal subunit"/>
    <property type="evidence" value="ECO:0007669"/>
    <property type="project" value="TreeGrafter"/>
</dbReference>
<dbReference type="GO" id="GO:0003735">
    <property type="term" value="F:structural constituent of ribosome"/>
    <property type="evidence" value="ECO:0007669"/>
    <property type="project" value="InterPro"/>
</dbReference>
<dbReference type="GO" id="GO:0006412">
    <property type="term" value="P:translation"/>
    <property type="evidence" value="ECO:0007669"/>
    <property type="project" value="UniProtKB-UniRule"/>
</dbReference>
<dbReference type="FunFam" id="4.10.410.60:FF:000001">
    <property type="entry name" value="50S ribosomal protein L35"/>
    <property type="match status" value="1"/>
</dbReference>
<dbReference type="Gene3D" id="4.10.410.60">
    <property type="match status" value="1"/>
</dbReference>
<dbReference type="HAMAP" id="MF_00514">
    <property type="entry name" value="Ribosomal_bL35"/>
    <property type="match status" value="1"/>
</dbReference>
<dbReference type="InterPro" id="IPR001706">
    <property type="entry name" value="Ribosomal_bL35"/>
</dbReference>
<dbReference type="InterPro" id="IPR021137">
    <property type="entry name" value="Ribosomal_bL35-like"/>
</dbReference>
<dbReference type="InterPro" id="IPR018265">
    <property type="entry name" value="Ribosomal_bL35_CS"/>
</dbReference>
<dbReference type="InterPro" id="IPR037229">
    <property type="entry name" value="Ribosomal_bL35_sf"/>
</dbReference>
<dbReference type="NCBIfam" id="TIGR00001">
    <property type="entry name" value="rpmI_bact"/>
    <property type="match status" value="1"/>
</dbReference>
<dbReference type="PANTHER" id="PTHR33343">
    <property type="entry name" value="54S RIBOSOMAL PROTEIN BL35M"/>
    <property type="match status" value="1"/>
</dbReference>
<dbReference type="PANTHER" id="PTHR33343:SF1">
    <property type="entry name" value="LARGE RIBOSOMAL SUBUNIT PROTEIN BL35M"/>
    <property type="match status" value="1"/>
</dbReference>
<dbReference type="Pfam" id="PF01632">
    <property type="entry name" value="Ribosomal_L35p"/>
    <property type="match status" value="1"/>
</dbReference>
<dbReference type="PRINTS" id="PR00064">
    <property type="entry name" value="RIBOSOMALL35"/>
</dbReference>
<dbReference type="SUPFAM" id="SSF143034">
    <property type="entry name" value="L35p-like"/>
    <property type="match status" value="1"/>
</dbReference>
<dbReference type="PROSITE" id="PS00936">
    <property type="entry name" value="RIBOSOMAL_L35"/>
    <property type="match status" value="1"/>
</dbReference>
<evidence type="ECO:0000255" key="1">
    <source>
        <dbReference type="HAMAP-Rule" id="MF_00514"/>
    </source>
</evidence>
<evidence type="ECO:0000256" key="2">
    <source>
        <dbReference type="SAM" id="MobiDB-lite"/>
    </source>
</evidence>
<evidence type="ECO:0000305" key="3"/>
<name>RL35_TRIL1</name>
<proteinExistence type="inferred from homology"/>
<accession>B3E1T7</accession>
<protein>
    <recommendedName>
        <fullName evidence="1">Large ribosomal subunit protein bL35</fullName>
    </recommendedName>
    <alternativeName>
        <fullName evidence="3">50S ribosomal protein L35</fullName>
    </alternativeName>
</protein>